<sequence>MDTAELVALLHLASPALPIGAFSYSQGLEAALDAPLIRDADGARDWIASGLADVLAQGELPFLAHQLARWHAHDAAALADANDEFVASRESFELRRETEQMGWSLAQLCASLEWGDAARRATLASIPSVALPSAFAFAAAAHGATPDAALAAYAFGWVENQTAAAIKAVPLGQLAGQKIIVALREPIRDAVRRALATPPEAINTFAPQLGILSARHESQYSRLFRS</sequence>
<gene>
    <name evidence="1" type="primary">ureF</name>
    <name type="ordered locus">BMA10247_2059</name>
</gene>
<name>UREF_BURM7</name>
<comment type="function">
    <text evidence="1">Required for maturation of urease via the functional incorporation of the urease nickel metallocenter.</text>
</comment>
<comment type="subunit">
    <text evidence="1">UreD, UreF and UreG form a complex that acts as a GTP-hydrolysis-dependent molecular chaperone, activating the urease apoprotein by helping to assemble the nickel containing metallocenter of UreC. The UreE protein probably delivers the nickel.</text>
</comment>
<comment type="subcellular location">
    <subcellularLocation>
        <location evidence="1">Cytoplasm</location>
    </subcellularLocation>
</comment>
<comment type="similarity">
    <text evidence="1">Belongs to the UreF family.</text>
</comment>
<comment type="sequence caution" evidence="2">
    <conflict type="erroneous initiation">
        <sequence resource="EMBL-CDS" id="ABO05344"/>
    </conflict>
</comment>
<keyword id="KW-0143">Chaperone</keyword>
<keyword id="KW-0963">Cytoplasm</keyword>
<keyword id="KW-0996">Nickel insertion</keyword>
<proteinExistence type="inferred from homology"/>
<reference key="1">
    <citation type="journal article" date="2010" name="Genome Biol. Evol.">
        <title>Continuing evolution of Burkholderia mallei through genome reduction and large-scale rearrangements.</title>
        <authorList>
            <person name="Losada L."/>
            <person name="Ronning C.M."/>
            <person name="DeShazer D."/>
            <person name="Woods D."/>
            <person name="Fedorova N."/>
            <person name="Kim H.S."/>
            <person name="Shabalina S.A."/>
            <person name="Pearson T.R."/>
            <person name="Brinkac L."/>
            <person name="Tan P."/>
            <person name="Nandi T."/>
            <person name="Crabtree J."/>
            <person name="Badger J."/>
            <person name="Beckstrom-Sternberg S."/>
            <person name="Saqib M."/>
            <person name="Schutzer S.E."/>
            <person name="Keim P."/>
            <person name="Nierman W.C."/>
        </authorList>
    </citation>
    <scope>NUCLEOTIDE SEQUENCE [LARGE SCALE GENOMIC DNA]</scope>
    <source>
        <strain>NCTC 10247</strain>
    </source>
</reference>
<organism>
    <name type="scientific">Burkholderia mallei (strain NCTC 10247)</name>
    <dbReference type="NCBI Taxonomy" id="320389"/>
    <lineage>
        <taxon>Bacteria</taxon>
        <taxon>Pseudomonadati</taxon>
        <taxon>Pseudomonadota</taxon>
        <taxon>Betaproteobacteria</taxon>
        <taxon>Burkholderiales</taxon>
        <taxon>Burkholderiaceae</taxon>
        <taxon>Burkholderia</taxon>
        <taxon>pseudomallei group</taxon>
    </lineage>
</organism>
<dbReference type="EMBL" id="CP000548">
    <property type="protein sequence ID" value="ABO05344.1"/>
    <property type="status" value="ALT_INIT"/>
    <property type="molecule type" value="Genomic_DNA"/>
</dbReference>
<dbReference type="RefSeq" id="WP_004533998.1">
    <property type="nucleotide sequence ID" value="NZ_CP007802.1"/>
</dbReference>
<dbReference type="SMR" id="A3MMV4"/>
<dbReference type="KEGG" id="bmaz:BM44_1168"/>
<dbReference type="KEGG" id="bmn:BMA10247_2059"/>
<dbReference type="PATRIC" id="fig|320389.8.peg.1304"/>
<dbReference type="GO" id="GO:0005737">
    <property type="term" value="C:cytoplasm"/>
    <property type="evidence" value="ECO:0007669"/>
    <property type="project" value="UniProtKB-SubCell"/>
</dbReference>
<dbReference type="GO" id="GO:0016151">
    <property type="term" value="F:nickel cation binding"/>
    <property type="evidence" value="ECO:0007669"/>
    <property type="project" value="UniProtKB-UniRule"/>
</dbReference>
<dbReference type="Gene3D" id="1.10.4190.10">
    <property type="entry name" value="Urease accessory protein UreF"/>
    <property type="match status" value="1"/>
</dbReference>
<dbReference type="HAMAP" id="MF_01385">
    <property type="entry name" value="UreF"/>
    <property type="match status" value="1"/>
</dbReference>
<dbReference type="InterPro" id="IPR002639">
    <property type="entry name" value="UreF"/>
</dbReference>
<dbReference type="InterPro" id="IPR038277">
    <property type="entry name" value="UreF_sf"/>
</dbReference>
<dbReference type="PANTHER" id="PTHR33620">
    <property type="entry name" value="UREASE ACCESSORY PROTEIN F"/>
    <property type="match status" value="1"/>
</dbReference>
<dbReference type="PANTHER" id="PTHR33620:SF1">
    <property type="entry name" value="UREASE ACCESSORY PROTEIN F"/>
    <property type="match status" value="1"/>
</dbReference>
<dbReference type="Pfam" id="PF01730">
    <property type="entry name" value="UreF"/>
    <property type="match status" value="1"/>
</dbReference>
<dbReference type="PIRSF" id="PIRSF009467">
    <property type="entry name" value="Ureas_acces_UreF"/>
    <property type="match status" value="1"/>
</dbReference>
<accession>A3MMV4</accession>
<evidence type="ECO:0000255" key="1">
    <source>
        <dbReference type="HAMAP-Rule" id="MF_01385"/>
    </source>
</evidence>
<evidence type="ECO:0000305" key="2"/>
<feature type="chain" id="PRO_0000344102" description="Urease accessory protein UreF">
    <location>
        <begin position="1"/>
        <end position="226"/>
    </location>
</feature>
<protein>
    <recommendedName>
        <fullName evidence="1">Urease accessory protein UreF</fullName>
    </recommendedName>
</protein>